<protein>
    <recommendedName>
        <fullName evidence="1">Uroporphyrinogen decarboxylase</fullName>
        <shortName evidence="1">UPD</shortName>
        <shortName evidence="1">URO-D</shortName>
        <ecNumber evidence="1">4.1.1.37</ecNumber>
    </recommendedName>
</protein>
<reference key="1">
    <citation type="submission" date="2009-07" db="EMBL/GenBank/DDBJ databases">
        <title>Complete sequence of Geobacter sp. M21.</title>
        <authorList>
            <consortium name="US DOE Joint Genome Institute"/>
            <person name="Lucas S."/>
            <person name="Copeland A."/>
            <person name="Lapidus A."/>
            <person name="Glavina del Rio T."/>
            <person name="Dalin E."/>
            <person name="Tice H."/>
            <person name="Bruce D."/>
            <person name="Goodwin L."/>
            <person name="Pitluck S."/>
            <person name="Saunders E."/>
            <person name="Brettin T."/>
            <person name="Detter J.C."/>
            <person name="Han C."/>
            <person name="Larimer F."/>
            <person name="Land M."/>
            <person name="Hauser L."/>
            <person name="Kyrpides N."/>
            <person name="Ovchinnikova G."/>
            <person name="Lovley D."/>
        </authorList>
    </citation>
    <scope>NUCLEOTIDE SEQUENCE [LARGE SCALE GENOMIC DNA]</scope>
    <source>
        <strain>M21</strain>
    </source>
</reference>
<comment type="function">
    <text evidence="1">Catalyzes the decarboxylation of four acetate groups of uroporphyrinogen-III to yield coproporphyrinogen-III.</text>
</comment>
<comment type="catalytic activity">
    <reaction evidence="1">
        <text>uroporphyrinogen III + 4 H(+) = coproporphyrinogen III + 4 CO2</text>
        <dbReference type="Rhea" id="RHEA:19865"/>
        <dbReference type="ChEBI" id="CHEBI:15378"/>
        <dbReference type="ChEBI" id="CHEBI:16526"/>
        <dbReference type="ChEBI" id="CHEBI:57308"/>
        <dbReference type="ChEBI" id="CHEBI:57309"/>
        <dbReference type="EC" id="4.1.1.37"/>
    </reaction>
</comment>
<comment type="pathway">
    <text evidence="1">Porphyrin-containing compound metabolism; protoporphyrin-IX biosynthesis; coproporphyrinogen-III from 5-aminolevulinate: step 4/4.</text>
</comment>
<comment type="subunit">
    <text evidence="1">Homodimer.</text>
</comment>
<comment type="subcellular location">
    <subcellularLocation>
        <location evidence="1">Cytoplasm</location>
    </subcellularLocation>
</comment>
<comment type="similarity">
    <text evidence="1">Belongs to the uroporphyrinogen decarboxylase family.</text>
</comment>
<evidence type="ECO:0000255" key="1">
    <source>
        <dbReference type="HAMAP-Rule" id="MF_00218"/>
    </source>
</evidence>
<keyword id="KW-0963">Cytoplasm</keyword>
<keyword id="KW-0210">Decarboxylase</keyword>
<keyword id="KW-0456">Lyase</keyword>
<keyword id="KW-0627">Porphyrin biosynthesis</keyword>
<name>DCUP_GEOSM</name>
<gene>
    <name evidence="1" type="primary">hemE</name>
    <name type="ordered locus">GM21_0015</name>
</gene>
<proteinExistence type="inferred from homology"/>
<sequence>MNTRFLDACWGKPVDTVPVWLMRQAGRYLPDYMRVRSKCTFLELCKTPELATEVTVQPVDILGVDAAILFSDILTPIEPMGMELDFTPGPVFAKPIRTMADVEALKIPKMETDVPYVLDAVKLLRKELAAKVPLIGFGGAPFTLACYMVEGKGSKDFAALKKMMYADPEVYAALMEKITTMDMEYLNAQIKAGAQAIQIFDTWGGMLSPADYERYVLPYTQRLINGLDRTNIPVIHFVKGAGTMLEIVKQAGGDVMGLDWHVNLGKARDILGDMAVQGNLDPTVLFAPNEIIEREVKRVLDENAGRPGLIFNLGHGILPTVPPEKAIFMVDCVHRLSRK</sequence>
<organism>
    <name type="scientific">Geobacter sp. (strain M21)</name>
    <dbReference type="NCBI Taxonomy" id="443144"/>
    <lineage>
        <taxon>Bacteria</taxon>
        <taxon>Pseudomonadati</taxon>
        <taxon>Thermodesulfobacteriota</taxon>
        <taxon>Desulfuromonadia</taxon>
        <taxon>Geobacterales</taxon>
        <taxon>Geobacteraceae</taxon>
        <taxon>Geobacter</taxon>
    </lineage>
</organism>
<feature type="chain" id="PRO_1000204232" description="Uroporphyrinogen decarboxylase">
    <location>
        <begin position="1"/>
        <end position="339"/>
    </location>
</feature>
<feature type="binding site" evidence="1">
    <location>
        <begin position="23"/>
        <end position="27"/>
    </location>
    <ligand>
        <name>substrate</name>
    </ligand>
</feature>
<feature type="binding site" evidence="1">
    <location>
        <position position="72"/>
    </location>
    <ligand>
        <name>substrate</name>
    </ligand>
</feature>
<feature type="binding site" evidence="1">
    <location>
        <position position="147"/>
    </location>
    <ligand>
        <name>substrate</name>
    </ligand>
</feature>
<feature type="binding site" evidence="1">
    <location>
        <position position="202"/>
    </location>
    <ligand>
        <name>substrate</name>
    </ligand>
</feature>
<feature type="binding site" evidence="1">
    <location>
        <position position="315"/>
    </location>
    <ligand>
        <name>substrate</name>
    </ligand>
</feature>
<feature type="site" description="Transition state stabilizer" evidence="1">
    <location>
        <position position="72"/>
    </location>
</feature>
<accession>C6E7R9</accession>
<dbReference type="EC" id="4.1.1.37" evidence="1"/>
<dbReference type="EMBL" id="CP001661">
    <property type="protein sequence ID" value="ACT16102.1"/>
    <property type="molecule type" value="Genomic_DNA"/>
</dbReference>
<dbReference type="SMR" id="C6E7R9"/>
<dbReference type="STRING" id="443144.GM21_0015"/>
<dbReference type="KEGG" id="gem:GM21_0015"/>
<dbReference type="eggNOG" id="COG0407">
    <property type="taxonomic scope" value="Bacteria"/>
</dbReference>
<dbReference type="HOGENOM" id="CLU_040933_0_1_7"/>
<dbReference type="OrthoDB" id="9806656at2"/>
<dbReference type="UniPathway" id="UPA00251">
    <property type="reaction ID" value="UER00321"/>
</dbReference>
<dbReference type="GO" id="GO:0005829">
    <property type="term" value="C:cytosol"/>
    <property type="evidence" value="ECO:0007669"/>
    <property type="project" value="TreeGrafter"/>
</dbReference>
<dbReference type="GO" id="GO:0004853">
    <property type="term" value="F:uroporphyrinogen decarboxylase activity"/>
    <property type="evidence" value="ECO:0007669"/>
    <property type="project" value="UniProtKB-UniRule"/>
</dbReference>
<dbReference type="GO" id="GO:0019353">
    <property type="term" value="P:protoporphyrinogen IX biosynthetic process from glutamate"/>
    <property type="evidence" value="ECO:0007669"/>
    <property type="project" value="TreeGrafter"/>
</dbReference>
<dbReference type="CDD" id="cd00717">
    <property type="entry name" value="URO-D"/>
    <property type="match status" value="1"/>
</dbReference>
<dbReference type="FunFam" id="3.20.20.210:FF:000007">
    <property type="entry name" value="Uroporphyrinogen decarboxylase"/>
    <property type="match status" value="1"/>
</dbReference>
<dbReference type="Gene3D" id="3.20.20.210">
    <property type="match status" value="1"/>
</dbReference>
<dbReference type="HAMAP" id="MF_00218">
    <property type="entry name" value="URO_D"/>
    <property type="match status" value="1"/>
</dbReference>
<dbReference type="InterPro" id="IPR038071">
    <property type="entry name" value="UROD/MetE-like_sf"/>
</dbReference>
<dbReference type="InterPro" id="IPR006361">
    <property type="entry name" value="Uroporphyrinogen_deCO2ase_HemE"/>
</dbReference>
<dbReference type="InterPro" id="IPR000257">
    <property type="entry name" value="Uroporphyrinogen_deCOase"/>
</dbReference>
<dbReference type="NCBIfam" id="TIGR01464">
    <property type="entry name" value="hemE"/>
    <property type="match status" value="1"/>
</dbReference>
<dbReference type="PANTHER" id="PTHR21091">
    <property type="entry name" value="METHYLTETRAHYDROFOLATE:HOMOCYSTEINE METHYLTRANSFERASE RELATED"/>
    <property type="match status" value="1"/>
</dbReference>
<dbReference type="PANTHER" id="PTHR21091:SF169">
    <property type="entry name" value="UROPORPHYRINOGEN DECARBOXYLASE"/>
    <property type="match status" value="1"/>
</dbReference>
<dbReference type="Pfam" id="PF01208">
    <property type="entry name" value="URO-D"/>
    <property type="match status" value="1"/>
</dbReference>
<dbReference type="SUPFAM" id="SSF51726">
    <property type="entry name" value="UROD/MetE-like"/>
    <property type="match status" value="1"/>
</dbReference>
<dbReference type="PROSITE" id="PS00906">
    <property type="entry name" value="UROD_1"/>
    <property type="match status" value="1"/>
</dbReference>
<dbReference type="PROSITE" id="PS00907">
    <property type="entry name" value="UROD_2"/>
    <property type="match status" value="1"/>
</dbReference>